<proteinExistence type="evidence at transcript level"/>
<organism>
    <name type="scientific">Bacillus amyloliquefaciens</name>
    <name type="common">Bacillus velezensis</name>
    <dbReference type="NCBI Taxonomy" id="1390"/>
    <lineage>
        <taxon>Bacteria</taxon>
        <taxon>Bacillati</taxon>
        <taxon>Bacillota</taxon>
        <taxon>Bacilli</taxon>
        <taxon>Bacillales</taxon>
        <taxon>Bacillaceae</taxon>
        <taxon>Bacillus</taxon>
        <taxon>Bacillus amyloliquefaciens group</taxon>
    </lineage>
</organism>
<feature type="signal peptide" evidence="2">
    <location>
        <begin position="1"/>
        <end position="29"/>
    </location>
</feature>
<feature type="chain" id="PRO_0000012247" description="Levansucrase">
    <location>
        <begin position="30"/>
        <end position="472"/>
    </location>
</feature>
<feature type="active site" description="Nucleophile" evidence="1">
    <location>
        <position position="86"/>
    </location>
</feature>
<feature type="active site" description="Proton donor/acceptor" evidence="1">
    <location>
        <position position="342"/>
    </location>
</feature>
<feature type="binding site" evidence="1">
    <location>
        <position position="85"/>
    </location>
    <ligand>
        <name>sucrose</name>
        <dbReference type="ChEBI" id="CHEBI:17992"/>
    </ligand>
</feature>
<feature type="binding site" evidence="1">
    <location>
        <position position="86"/>
    </location>
    <ligand>
        <name>sucrose</name>
        <dbReference type="ChEBI" id="CHEBI:17992"/>
    </ligand>
</feature>
<feature type="binding site" evidence="1">
    <location>
        <position position="164"/>
    </location>
    <ligand>
        <name>sucrose</name>
        <dbReference type="ChEBI" id="CHEBI:17992"/>
    </ligand>
</feature>
<feature type="binding site" evidence="1">
    <location>
        <position position="241"/>
    </location>
    <ligand>
        <name>Ca(2+)</name>
        <dbReference type="ChEBI" id="CHEBI:29108"/>
    </ligand>
</feature>
<feature type="binding site" evidence="1">
    <location>
        <position position="246"/>
    </location>
    <ligand>
        <name>sucrose</name>
        <dbReference type="ChEBI" id="CHEBI:17992"/>
    </ligand>
</feature>
<feature type="binding site" evidence="1">
    <location>
        <position position="247"/>
    </location>
    <ligand>
        <name>sucrose</name>
        <dbReference type="ChEBI" id="CHEBI:17992"/>
    </ligand>
</feature>
<feature type="binding site" evidence="1">
    <location>
        <position position="272"/>
    </location>
    <ligand>
        <name>Ca(2+)</name>
        <dbReference type="ChEBI" id="CHEBI:29108"/>
    </ligand>
</feature>
<feature type="binding site" evidence="1">
    <location>
        <position position="308"/>
    </location>
    <ligand>
        <name>Ca(2+)</name>
        <dbReference type="ChEBI" id="CHEBI:29108"/>
    </ligand>
</feature>
<feature type="binding site" evidence="1">
    <location>
        <position position="310"/>
    </location>
    <ligand>
        <name>Ca(2+)</name>
        <dbReference type="ChEBI" id="CHEBI:29108"/>
    </ligand>
</feature>
<feature type="binding site" evidence="1">
    <location>
        <position position="339"/>
    </location>
    <ligand>
        <name>Ca(2+)</name>
        <dbReference type="ChEBI" id="CHEBI:29108"/>
    </ligand>
</feature>
<feature type="binding site" evidence="1">
    <location>
        <position position="340"/>
    </location>
    <ligand>
        <name>sucrose</name>
        <dbReference type="ChEBI" id="CHEBI:17992"/>
    </ligand>
</feature>
<feature type="binding site" evidence="1">
    <location>
        <position position="360"/>
    </location>
    <ligand>
        <name>sucrose</name>
        <dbReference type="ChEBI" id="CHEBI:17992"/>
    </ligand>
</feature>
<feature type="site" description="Transition state stabilizer" evidence="1">
    <location>
        <position position="247"/>
    </location>
</feature>
<dbReference type="EC" id="2.4.1.10" evidence="1"/>
<dbReference type="EMBL" id="X52988">
    <property type="protein sequence ID" value="CAA37179.1"/>
    <property type="molecule type" value="Genomic_DNA"/>
</dbReference>
<dbReference type="PIR" id="JQ0802">
    <property type="entry name" value="JQ0802"/>
</dbReference>
<dbReference type="SMR" id="P21130"/>
<dbReference type="STRING" id="692420.BAMF_3880"/>
<dbReference type="CAZy" id="GH68">
    <property type="family name" value="Glycoside Hydrolase Family 68"/>
</dbReference>
<dbReference type="eggNOG" id="COG1621">
    <property type="taxonomic scope" value="Bacteria"/>
</dbReference>
<dbReference type="BRENDA" id="2.4.1.10">
    <property type="organism ID" value="630"/>
</dbReference>
<dbReference type="GO" id="GO:0005576">
    <property type="term" value="C:extracellular region"/>
    <property type="evidence" value="ECO:0007669"/>
    <property type="project" value="UniProtKB-SubCell"/>
</dbReference>
<dbReference type="GO" id="GO:0050053">
    <property type="term" value="F:levansucrase activity"/>
    <property type="evidence" value="ECO:0007669"/>
    <property type="project" value="UniProtKB-EC"/>
</dbReference>
<dbReference type="GO" id="GO:0046872">
    <property type="term" value="F:metal ion binding"/>
    <property type="evidence" value="ECO:0007669"/>
    <property type="project" value="UniProtKB-KW"/>
</dbReference>
<dbReference type="GO" id="GO:0009758">
    <property type="term" value="P:carbohydrate utilization"/>
    <property type="evidence" value="ECO:0007669"/>
    <property type="project" value="InterPro"/>
</dbReference>
<dbReference type="CDD" id="cd08997">
    <property type="entry name" value="GH68"/>
    <property type="match status" value="1"/>
</dbReference>
<dbReference type="Gene3D" id="2.115.10.20">
    <property type="entry name" value="Glycosyl hydrolase domain, family 43"/>
    <property type="match status" value="1"/>
</dbReference>
<dbReference type="InterPro" id="IPR003469">
    <property type="entry name" value="Glyco_hydro_68"/>
</dbReference>
<dbReference type="InterPro" id="IPR023296">
    <property type="entry name" value="Glyco_hydro_beta-prop_sf"/>
</dbReference>
<dbReference type="Pfam" id="PF02435">
    <property type="entry name" value="Glyco_hydro_68"/>
    <property type="match status" value="1"/>
</dbReference>
<dbReference type="SUPFAM" id="SSF75005">
    <property type="entry name" value="Arabinanase/levansucrase/invertase"/>
    <property type="match status" value="1"/>
</dbReference>
<sequence length="472" mass="52859">MNIKKIVKQATVLTFTTALLAGGATQAFAKENNQKAYKETYGVSHITRHDMLQIPKQQQNEKYQVPQFDQSTIKNIESAKGLDVWDSWPLQNADGTVAEYNGYHVVFALAGSPKDADDTSIYMFYQKVGDNSIDSWKNAGRVFKDSDKFDANDPILKDQTQEWSGSATFTSDGKIRLFYTDYSGKHYGKQSLTTAQVNVSKSDDTLKINGVEDHKTIFDGDGKTYQNVQQFIDEGNYTSGDNHTLRDPHYVEDKGHKYLVFEANTGTENGYQGEESLFNKAYYGGGTNFFRKESQKLQQSAKKRDAELANGALGIIELNNDYTLKKVMKPLITSNTVTDEIERANVFKMNGKWYLFTDSRGSKMTIDGINSNDIYMLGYVSNSLTGPYKPLNKTGLVLQMGLDPNDVTFTYSHFAVPQAKGNNVVITSYMTNRGFFEDKKATFGPSFLMNIKGNKTSVVKNSILEQGQLTVN</sequence>
<protein>
    <recommendedName>
        <fullName evidence="4">Levansucrase</fullName>
        <shortName evidence="4">LVS</shortName>
        <ecNumber evidence="1">2.4.1.10</ecNumber>
    </recommendedName>
    <alternativeName>
        <fullName>Beta-D-fructofuranosyl transferase</fullName>
    </alternativeName>
    <alternativeName>
        <fullName>Sucrose 6-fructosyl transferase</fullName>
    </alternativeName>
</protein>
<keyword id="KW-0106">Calcium</keyword>
<keyword id="KW-0119">Carbohydrate metabolism</keyword>
<keyword id="KW-0328">Glycosyltransferase</keyword>
<keyword id="KW-0479">Metal-binding</keyword>
<keyword id="KW-0964">Secreted</keyword>
<keyword id="KW-0732">Signal</keyword>
<keyword id="KW-0808">Transferase</keyword>
<name>LSC_BACAM</name>
<evidence type="ECO:0000250" key="1">
    <source>
        <dbReference type="UniProtKB" id="P05655"/>
    </source>
</evidence>
<evidence type="ECO:0000255" key="2"/>
<evidence type="ECO:0000269" key="3">
    <source>
    </source>
</evidence>
<evidence type="ECO:0000303" key="4">
    <source>
    </source>
</evidence>
<evidence type="ECO:0000305" key="5"/>
<accession>P21130</accession>
<gene>
    <name evidence="4" type="primary">sacB</name>
</gene>
<comment type="function">
    <text evidence="1">Catalyzes the synthesis of levan, a fructose polymer, by transferring the fructosyl moiety from sucrose to a growing acceptor molecule (By similarity). Also displays sucrose hydrolase activity (By similarity).</text>
</comment>
<comment type="catalytic activity">
    <reaction evidence="1">
        <text>[6)-beta-D-fructofuranosyl-(2-&gt;](n) alpha-D-glucopyranoside + sucrose = [6)-beta-D-fructofuranosyl-(2-&gt;](n+1) alpha-D-glucopyranoside + D-glucose</text>
        <dbReference type="Rhea" id="RHEA:13653"/>
        <dbReference type="Rhea" id="RHEA-COMP:13093"/>
        <dbReference type="Rhea" id="RHEA-COMP:13094"/>
        <dbReference type="ChEBI" id="CHEBI:4167"/>
        <dbReference type="ChEBI" id="CHEBI:17992"/>
        <dbReference type="ChEBI" id="CHEBI:134464"/>
        <dbReference type="EC" id="2.4.1.10"/>
    </reaction>
</comment>
<comment type="activity regulation">
    <text evidence="1">Ca(2+) may play an important structural role and promote stability of levansucrase.</text>
</comment>
<comment type="subcellular location">
    <subcellularLocation>
        <location evidence="1">Secreted</location>
    </subcellularLocation>
</comment>
<comment type="induction">
    <text evidence="3">Induced by sucrose when expressed in B.subtilis.</text>
</comment>
<comment type="similarity">
    <text evidence="5">Belongs to the glycosyl hydrolase 68 family.</text>
</comment>
<reference key="1">
    <citation type="journal article" date="1990" name="Gene">
        <title>Isolation and characterization of levansucrase-encoding gene from Bacillus amyloliquefaciens.</title>
        <authorList>
            <person name="Tang L.B."/>
            <person name="Lenstra R."/>
            <person name="Borchert T.V."/>
            <person name="Vasantha N."/>
        </authorList>
    </citation>
    <scope>NUCLEOTIDE SEQUENCE [GENOMIC DNA]</scope>
    <scope>INDUCTION</scope>
    <source>
        <strain>ATCC 23844 / P</strain>
    </source>
</reference>